<comment type="function">
    <text evidence="1 2 3">Nonribosomal peptide synthetase; part of the gene cluster that mediates the biosynthesis of penicillin, the world's most important antibiotic (PubMed:2110531, PubMed:2120195). AatA catalyzes the exchange of the alpha-aminoadipyl side chain of isopenicillin N for phenylacetic acid to yield penicillin (PubMed:2110531, PubMed:2120195). This step occurs in the peroxisomal matrix and the penM and paaT transporters are involved in the isopenicillin N and phenylacetic acid import into the peroxisome, respectively (By similarity). The penicillin biosynthesis occurs via 3 enzymatic steps, the first corresponding to the production of the tripeptide N-[(5S)-5-amino-5-carboxypentanoyl]-L-cysteinyl-D-valine (LLD-ACV or ACV) by the NRPS acvA. The tripeptide ACV is then cyclized to isopenicillin N (IPN) by the isopenicillin N synthase ipnA that forms the beta-lactam nucleus. Finally, the alpha-aminoadipyl side chain is exchanged for phenylacetic acid by the isopenicillin N acyltransferase penDE to yield penicillin in the peroxisomal matrix (By similarity).</text>
</comment>
<comment type="catalytic activity">
    <reaction evidence="2 3">
        <text>isopenicillin N + phenylacetyl-CoA + H2O = penicillin G + L-2-aminoadipate + CoA + H(+)</text>
        <dbReference type="Rhea" id="RHEA:20720"/>
        <dbReference type="ChEBI" id="CHEBI:15377"/>
        <dbReference type="ChEBI" id="CHEBI:15378"/>
        <dbReference type="ChEBI" id="CHEBI:51354"/>
        <dbReference type="ChEBI" id="CHEBI:57287"/>
        <dbReference type="ChEBI" id="CHEBI:57390"/>
        <dbReference type="ChEBI" id="CHEBI:58399"/>
        <dbReference type="ChEBI" id="CHEBI:58672"/>
        <dbReference type="EC" id="2.3.1.164"/>
    </reaction>
    <physiologicalReaction direction="left-to-right" evidence="2 3">
        <dbReference type="Rhea" id="RHEA:20721"/>
    </physiologicalReaction>
</comment>
<comment type="pathway">
    <text evidence="2 3">Antibiotic biosynthesis; penicillin G biosynthesis; penicillin G from L-alpha-aminoadipate and L-cysteine and L-valine: step 3/3.</text>
</comment>
<comment type="subunit">
    <text evidence="2 3">The active form of the enzyme results from processing of the 40-kDa monomeric precursor to a heterodimer containing subunits of 11 and 29 kDa.</text>
</comment>
<comment type="subcellular location">
    <subcellularLocation>
        <location evidence="1">Peroxisome matrix</location>
    </subcellularLocation>
    <text evidence="1">The unprocessed preprotein is translocated inside peroxisomes and regulates its self-processing.</text>
</comment>
<comment type="PTM">
    <text evidence="3">The pre-AAT protein is synthesized as 40 kDa precursor which is then self-processed into an 11 kDa (protein A) and a 29 kDa (protein B). The B protein carries AAT activity.</text>
</comment>
<comment type="similarity">
    <text evidence="5">Belongs to the peptidase C45 family.</text>
</comment>
<comment type="sequence caution" evidence="5">
    <conflict type="erroneous gene model prediction">
        <sequence resource="EMBL-CDS" id="EAA62970"/>
    </conflict>
</comment>
<keyword id="KW-0012">Acyltransferase</keyword>
<keyword id="KW-0045">Antibiotic biosynthesis</keyword>
<keyword id="KW-0903">Direct protein sequencing</keyword>
<keyword id="KW-0576">Peroxisome</keyword>
<keyword id="KW-1185">Reference proteome</keyword>
<keyword id="KW-0808">Transferase</keyword>
<keyword id="KW-0865">Zymogen</keyword>
<organism>
    <name type="scientific">Emericella nidulans (strain FGSC A4 / ATCC 38163 / CBS 112.46 / NRRL 194 / M139)</name>
    <name type="common">Aspergillus nidulans</name>
    <dbReference type="NCBI Taxonomy" id="227321"/>
    <lineage>
        <taxon>Eukaryota</taxon>
        <taxon>Fungi</taxon>
        <taxon>Dikarya</taxon>
        <taxon>Ascomycota</taxon>
        <taxon>Pezizomycotina</taxon>
        <taxon>Eurotiomycetes</taxon>
        <taxon>Eurotiomycetidae</taxon>
        <taxon>Eurotiales</taxon>
        <taxon>Aspergillaceae</taxon>
        <taxon>Aspergillus</taxon>
        <taxon>Aspergillus subgen. Nidulantes</taxon>
    </lineage>
</organism>
<accession>P21133</accession>
<accession>C8VHS6</accession>
<accession>Q5BA07</accession>
<gene>
    <name evidence="4" type="primary">penDE</name>
    <name type="synonym">aat</name>
    <name type="ORF">AN2623</name>
</gene>
<protein>
    <recommendedName>
        <fullName evidence="4">Acyl-coenzyme A:6-aminopenicillanic-acid-acyltransferase 40 kDa form</fullName>
        <ecNumber evidence="2 3">2.3.1.164</ecNumber>
    </recommendedName>
    <alternativeName>
        <fullName evidence="4">Isopenicillin-N N-acyltransferase</fullName>
    </alternativeName>
    <component>
        <recommendedName>
            <fullName evidence="1">Acyl-coenzyme A:6-aminopenicillanic-acid-acyltransferase 11 kDa subunit</fullName>
        </recommendedName>
    </component>
    <component>
        <recommendedName>
            <fullName evidence="1">Acyl-coenzyme A:6-aminopenicillanic-acid-acyltransferase 29 kDa subunit</fullName>
        </recommendedName>
    </component>
</protein>
<name>AATA_EMENI</name>
<evidence type="ECO:0000250" key="1">
    <source>
        <dbReference type="UniProtKB" id="P15802"/>
    </source>
</evidence>
<evidence type="ECO:0000269" key="2">
    <source>
    </source>
</evidence>
<evidence type="ECO:0000269" key="3">
    <source>
    </source>
</evidence>
<evidence type="ECO:0000303" key="4">
    <source>
    </source>
</evidence>
<evidence type="ECO:0000305" key="5"/>
<feature type="chain" id="PRO_0000020592" description="Acyl-coenzyme A:6-aminopenicillanic-acid-acyltransferase 40 kDa form">
    <location>
        <begin position="1"/>
        <end position="357"/>
    </location>
</feature>
<feature type="chain" id="PRO_0000020593" description="Acyl-coenzyme A:6-aminopenicillanic-acid-acyltransferase 11 kDa subunit">
    <location>
        <begin position="1"/>
        <end position="102"/>
    </location>
</feature>
<feature type="chain" id="PRO_0000020594" description="Acyl-coenzyme A:6-aminopenicillanic-acid-acyltransferase 29 kDa subunit">
    <location>
        <begin position="103"/>
        <end position="357"/>
    </location>
</feature>
<feature type="binding site" evidence="1">
    <location>
        <position position="121"/>
    </location>
    <ligand>
        <name>6-aminopenicillanate</name>
        <dbReference type="ChEBI" id="CHEBI:57869"/>
    </ligand>
</feature>
<feature type="binding site" evidence="1">
    <location>
        <position position="310"/>
    </location>
    <ligand>
        <name>6-aminopenicillanate</name>
        <dbReference type="ChEBI" id="CHEBI:57869"/>
    </ligand>
</feature>
<dbReference type="EC" id="2.3.1.164" evidence="2 3"/>
<dbReference type="EMBL" id="X53310">
    <property type="protein sequence ID" value="CAA37394.1"/>
    <property type="molecule type" value="Genomic_DNA"/>
</dbReference>
<dbReference type="EMBL" id="M58293">
    <property type="protein sequence ID" value="AAA33287.1"/>
    <property type="molecule type" value="Genomic_DNA"/>
</dbReference>
<dbReference type="EMBL" id="AACD01000045">
    <property type="protein sequence ID" value="EAA62970.1"/>
    <property type="status" value="ALT_SEQ"/>
    <property type="molecule type" value="Genomic_DNA"/>
</dbReference>
<dbReference type="EMBL" id="BN001306">
    <property type="protein sequence ID" value="CBF84346.1"/>
    <property type="molecule type" value="Genomic_DNA"/>
</dbReference>
<dbReference type="PIR" id="S12169">
    <property type="entry name" value="S12169"/>
</dbReference>
<dbReference type="RefSeq" id="XP_660227.1">
    <property type="nucleotide sequence ID" value="XM_655135.1"/>
</dbReference>
<dbReference type="SMR" id="P21133"/>
<dbReference type="STRING" id="227321.P21133"/>
<dbReference type="MEROPS" id="C45.001"/>
<dbReference type="EnsemblFungi" id="CBF84346">
    <property type="protein sequence ID" value="CBF84346"/>
    <property type="gene ID" value="ANIA_02623"/>
</dbReference>
<dbReference type="VEuPathDB" id="FungiDB:AN2623"/>
<dbReference type="eggNOG" id="ENOG502RY9N">
    <property type="taxonomic scope" value="Eukaryota"/>
</dbReference>
<dbReference type="HOGENOM" id="CLU_037787_1_0_1"/>
<dbReference type="InParanoid" id="P21133"/>
<dbReference type="OMA" id="NWDFFSA"/>
<dbReference type="OrthoDB" id="189997at2759"/>
<dbReference type="BioCyc" id="MetaCyc:MONOMER-19537"/>
<dbReference type="BioCyc" id="MetaCyc:MONOMER-19538"/>
<dbReference type="UniPathway" id="UPA00149">
    <property type="reaction ID" value="UER00241"/>
</dbReference>
<dbReference type="Proteomes" id="UP000000560">
    <property type="component" value="Chromosome VI"/>
</dbReference>
<dbReference type="GO" id="GO:0005782">
    <property type="term" value="C:peroxisomal matrix"/>
    <property type="evidence" value="ECO:0000250"/>
    <property type="project" value="GO_Central"/>
</dbReference>
<dbReference type="GO" id="GO:0050640">
    <property type="term" value="F:isopenicillin-N N-acyltransferase activity"/>
    <property type="evidence" value="ECO:0000315"/>
    <property type="project" value="AspGD"/>
</dbReference>
<dbReference type="GO" id="GO:0042318">
    <property type="term" value="P:penicillin biosynthetic process"/>
    <property type="evidence" value="ECO:0000315"/>
    <property type="project" value="AspGD"/>
</dbReference>
<dbReference type="FunFam" id="1.10.10.2120:FF:000002">
    <property type="entry name" value="Acyl-coenzyme A:6-aminopenicillanic-acid-acyltransferase 40 kDa form"/>
    <property type="match status" value="1"/>
</dbReference>
<dbReference type="FunFam" id="3.60.60.10:FF:000010">
    <property type="entry name" value="Acyl-coenzyme A:6-aminopenicillanic-acid-acyltransferase 40 kDa form"/>
    <property type="match status" value="1"/>
</dbReference>
<dbReference type="Gene3D" id="1.10.10.2120">
    <property type="match status" value="1"/>
</dbReference>
<dbReference type="Gene3D" id="3.60.60.10">
    <property type="entry name" value="Penicillin V Acylase, Chain A"/>
    <property type="match status" value="1"/>
</dbReference>
<dbReference type="InterPro" id="IPR047794">
    <property type="entry name" value="C45_proenzyme-like"/>
</dbReference>
<dbReference type="InterPro" id="IPR047801">
    <property type="entry name" value="Peptidase_C45"/>
</dbReference>
<dbReference type="InterPro" id="IPR005079">
    <property type="entry name" value="Peptidase_C45_hydrolase"/>
</dbReference>
<dbReference type="NCBIfam" id="NF040521">
    <property type="entry name" value="C45_proenzyme"/>
    <property type="match status" value="1"/>
</dbReference>
<dbReference type="PANTHER" id="PTHR34180:SF1">
    <property type="entry name" value="BETA-ALANYL-DOPAMINE_CARCININE HYDROLASE"/>
    <property type="match status" value="1"/>
</dbReference>
<dbReference type="PANTHER" id="PTHR34180">
    <property type="entry name" value="PEPTIDASE C45"/>
    <property type="match status" value="1"/>
</dbReference>
<dbReference type="Pfam" id="PF03417">
    <property type="entry name" value="AAT"/>
    <property type="match status" value="1"/>
</dbReference>
<proteinExistence type="evidence at protein level"/>
<reference key="1">
    <citation type="journal article" date="1990" name="Mol. Gen. Genet.">
        <title>Cloning, characterization of the acyl-CoA:6-amino penicillanic acid acyltransferase gene of Aspergillus nidulans and linkage to the isopenicillin N synthase gene.</title>
        <authorList>
            <person name="Montenegro E."/>
            <person name="Barredo J.L."/>
            <person name="Gutierrez S."/>
            <person name="Diez B."/>
            <person name="Alvarez E."/>
            <person name="Martin J.F."/>
        </authorList>
    </citation>
    <scope>NUCLEOTIDE SEQUENCE [GENOMIC DNA]</scope>
</reference>
<reference key="2">
    <citation type="journal article" date="1990" name="J. Bacteriol.">
        <title>Molecular characterization of the acyl-coenzyme A:isopenicillin N acyltransferase gene (penDE) from Penicillium chrysogenum and Aspergillus nidulans and activity of recombinant enzyme in Escherichia coli.</title>
        <authorList>
            <person name="Tobin M.B."/>
            <person name="Fleming M.D."/>
            <person name="Skatrud P.L."/>
            <person name="Miller J.R."/>
        </authorList>
    </citation>
    <scope>NUCLEOTIDE SEQUENCE [GENOMIC DNA]</scope>
    <scope>FUNCTION</scope>
    <scope>SUBUNIT</scope>
    <scope>CATALYTIC ACTIVITY</scope>
    <scope>PATHWAY</scope>
</reference>
<reference key="3">
    <citation type="journal article" date="2005" name="Nature">
        <title>Sequencing of Aspergillus nidulans and comparative analysis with A. fumigatus and A. oryzae.</title>
        <authorList>
            <person name="Galagan J.E."/>
            <person name="Calvo S.E."/>
            <person name="Cuomo C."/>
            <person name="Ma L.-J."/>
            <person name="Wortman J.R."/>
            <person name="Batzoglou S."/>
            <person name="Lee S.-I."/>
            <person name="Bastuerkmen M."/>
            <person name="Spevak C.C."/>
            <person name="Clutterbuck J."/>
            <person name="Kapitonov V."/>
            <person name="Jurka J."/>
            <person name="Scazzocchio C."/>
            <person name="Farman M.L."/>
            <person name="Butler J."/>
            <person name="Purcell S."/>
            <person name="Harris S."/>
            <person name="Braus G.H."/>
            <person name="Draht O."/>
            <person name="Busch S."/>
            <person name="D'Enfert C."/>
            <person name="Bouchier C."/>
            <person name="Goldman G.H."/>
            <person name="Bell-Pedersen D."/>
            <person name="Griffiths-Jones S."/>
            <person name="Doonan J.H."/>
            <person name="Yu J."/>
            <person name="Vienken K."/>
            <person name="Pain A."/>
            <person name="Freitag M."/>
            <person name="Selker E.U."/>
            <person name="Archer D.B."/>
            <person name="Penalva M.A."/>
            <person name="Oakley B.R."/>
            <person name="Momany M."/>
            <person name="Tanaka T."/>
            <person name="Kumagai T."/>
            <person name="Asai K."/>
            <person name="Machida M."/>
            <person name="Nierman W.C."/>
            <person name="Denning D.W."/>
            <person name="Caddick M.X."/>
            <person name="Hynes M."/>
            <person name="Paoletti M."/>
            <person name="Fischer R."/>
            <person name="Miller B.L."/>
            <person name="Dyer P.S."/>
            <person name="Sachs M.S."/>
            <person name="Osmani S.A."/>
            <person name="Birren B.W."/>
        </authorList>
    </citation>
    <scope>NUCLEOTIDE SEQUENCE [LARGE SCALE GENOMIC DNA]</scope>
    <source>
        <strain>FGSC A4 / ATCC 38163 / CBS 112.46 / NRRL 194 / M139</strain>
    </source>
</reference>
<reference key="4">
    <citation type="journal article" date="2009" name="Fungal Genet. Biol.">
        <title>The 2008 update of the Aspergillus nidulans genome annotation: a community effort.</title>
        <authorList>
            <person name="Wortman J.R."/>
            <person name="Gilsenan J.M."/>
            <person name="Joardar V."/>
            <person name="Deegan J."/>
            <person name="Clutterbuck J."/>
            <person name="Andersen M.R."/>
            <person name="Archer D."/>
            <person name="Bencina M."/>
            <person name="Braus G."/>
            <person name="Coutinho P."/>
            <person name="von Dohren H."/>
            <person name="Doonan J."/>
            <person name="Driessen A.J."/>
            <person name="Durek P."/>
            <person name="Espeso E."/>
            <person name="Fekete E."/>
            <person name="Flipphi M."/>
            <person name="Estrada C.G."/>
            <person name="Geysens S."/>
            <person name="Goldman G."/>
            <person name="de Groot P.W."/>
            <person name="Hansen K."/>
            <person name="Harris S.D."/>
            <person name="Heinekamp T."/>
            <person name="Helmstaedt K."/>
            <person name="Henrissat B."/>
            <person name="Hofmann G."/>
            <person name="Homan T."/>
            <person name="Horio T."/>
            <person name="Horiuchi H."/>
            <person name="James S."/>
            <person name="Jones M."/>
            <person name="Karaffa L."/>
            <person name="Karanyi Z."/>
            <person name="Kato M."/>
            <person name="Keller N."/>
            <person name="Kelly D.E."/>
            <person name="Kiel J.A."/>
            <person name="Kim J.M."/>
            <person name="van der Klei I.J."/>
            <person name="Klis F.M."/>
            <person name="Kovalchuk A."/>
            <person name="Krasevec N."/>
            <person name="Kubicek C.P."/>
            <person name="Liu B."/>
            <person name="Maccabe A."/>
            <person name="Meyer V."/>
            <person name="Mirabito P."/>
            <person name="Miskei M."/>
            <person name="Mos M."/>
            <person name="Mullins J."/>
            <person name="Nelson D.R."/>
            <person name="Nielsen J."/>
            <person name="Oakley B.R."/>
            <person name="Osmani S.A."/>
            <person name="Pakula T."/>
            <person name="Paszewski A."/>
            <person name="Paulsen I."/>
            <person name="Pilsyk S."/>
            <person name="Pocsi I."/>
            <person name="Punt P.J."/>
            <person name="Ram A.F."/>
            <person name="Ren Q."/>
            <person name="Robellet X."/>
            <person name="Robson G."/>
            <person name="Seiboth B."/>
            <person name="van Solingen P."/>
            <person name="Specht T."/>
            <person name="Sun J."/>
            <person name="Taheri-Talesh N."/>
            <person name="Takeshita N."/>
            <person name="Ussery D."/>
            <person name="vanKuyk P.A."/>
            <person name="Visser H."/>
            <person name="van de Vondervoort P.J."/>
            <person name="de Vries R.P."/>
            <person name="Walton J."/>
            <person name="Xiang X."/>
            <person name="Xiong Y."/>
            <person name="Zeng A.P."/>
            <person name="Brandt B.W."/>
            <person name="Cornell M.J."/>
            <person name="van den Hondel C.A."/>
            <person name="Visser J."/>
            <person name="Oliver S.G."/>
            <person name="Turner G."/>
        </authorList>
    </citation>
    <scope>GENOME REANNOTATION</scope>
    <source>
        <strain>FGSC A4 / ATCC 38163 / CBS 112.46 / NRRL 194 / M139</strain>
    </source>
</reference>
<reference key="5">
    <citation type="journal article" date="1990" name="FEBS Lett.">
        <title>Acyl coenzyme A: 6-aminopenicillanic acid acyltransferase from Penicillium chrysogenum and Aspergillus nidulans.</title>
        <authorList>
            <person name="Whiteman P.A."/>
            <person name="Abraham E.P."/>
            <person name="Baldwin J.E."/>
            <person name="Fleming M.D."/>
            <person name="Schofield C.J."/>
            <person name="Sutherland J.D."/>
            <person name="Willis A.C."/>
        </authorList>
    </citation>
    <scope>PROTEIN SEQUENCE OF 103-122</scope>
    <scope>FUNCTION</scope>
    <scope>SUBUNIT</scope>
    <scope>CATALYTIC ACTIVITY</scope>
    <scope>PATHWAY</scope>
</reference>
<sequence length="357" mass="39236">MLHVTCQGTPSEIGYHHGSAAKGEIAKAIDFATGLIHGKTKKTQAELEQLLRELEQVMKQRWPRYYEEICGIAKGAEREVSEIVMLNTRTEFAYGLVEARDGCTTVYCKTPNGALQGQNWDFFTATKENLIQLTICQPGLPTIKMITEAGIIGKVGFNSAGVAVNYNALHLHGLRPTGLPSHLALRMALESTSPSEAYEKIVSQGGMAASAFIMVGNAHEAYGLEFSPISLCKQVADTNGRIVHTNHCLLNHGPSAQELNPLPDSWSRHGRMEHLLSGFDGTKEAFAKLWEDEDNYPLSICRAYKEGKSRGSTLFNIVFDHVGRKATVRLGRPNNPDETFVMTFSNLDTKSAIQANI</sequence>